<reference key="1">
    <citation type="journal article" date="2001" name="Lancet">
        <title>Whole genome sequencing of meticillin-resistant Staphylococcus aureus.</title>
        <authorList>
            <person name="Kuroda M."/>
            <person name="Ohta T."/>
            <person name="Uchiyama I."/>
            <person name="Baba T."/>
            <person name="Yuzawa H."/>
            <person name="Kobayashi I."/>
            <person name="Cui L."/>
            <person name="Oguchi A."/>
            <person name="Aoki K."/>
            <person name="Nagai Y."/>
            <person name="Lian J.-Q."/>
            <person name="Ito T."/>
            <person name="Kanamori M."/>
            <person name="Matsumaru H."/>
            <person name="Maruyama A."/>
            <person name="Murakami H."/>
            <person name="Hosoyama A."/>
            <person name="Mizutani-Ui Y."/>
            <person name="Takahashi N.K."/>
            <person name="Sawano T."/>
            <person name="Inoue R."/>
            <person name="Kaito C."/>
            <person name="Sekimizu K."/>
            <person name="Hirakawa H."/>
            <person name="Kuhara S."/>
            <person name="Goto S."/>
            <person name="Yabuzaki J."/>
            <person name="Kanehisa M."/>
            <person name="Yamashita A."/>
            <person name="Oshima K."/>
            <person name="Furuya K."/>
            <person name="Yoshino C."/>
            <person name="Shiba T."/>
            <person name="Hattori M."/>
            <person name="Ogasawara N."/>
            <person name="Hayashi H."/>
            <person name="Hiramatsu K."/>
        </authorList>
    </citation>
    <scope>NUCLEOTIDE SEQUENCE [LARGE SCALE GENOMIC DNA]</scope>
    <source>
        <strain>N315</strain>
    </source>
</reference>
<reference key="2">
    <citation type="submission" date="2007-10" db="UniProtKB">
        <title>Shotgun proteomic analysis of total and membrane protein extracts of S. aureus strain N315.</title>
        <authorList>
            <person name="Vaezzadeh A.R."/>
            <person name="Deshusses J."/>
            <person name="Lescuyer P."/>
            <person name="Hochstrasser D.F."/>
        </authorList>
    </citation>
    <scope>IDENTIFICATION BY MASS SPECTROMETRY [LARGE SCALE ANALYSIS]</scope>
    <source>
        <strain>N315</strain>
    </source>
</reference>
<gene>
    <name evidence="1" type="primary">tagH</name>
    <name type="ordered locus">SA0593</name>
</gene>
<keyword id="KW-0067">ATP-binding</keyword>
<keyword id="KW-1003">Cell membrane</keyword>
<keyword id="KW-0472">Membrane</keyword>
<keyword id="KW-0547">Nucleotide-binding</keyword>
<keyword id="KW-1278">Translocase</keyword>
<keyword id="KW-0813">Transport</keyword>
<sequence>MNVSVNIKNVTKEYRIYRTNKERMKDALIPKHKNKTFFALDDISLKAYEGDVIGLVGINGSGKSTLSNIIGGSLSPTVGKVDRNGEVSVIAISAGLSGQLTGIENIEFKMLCMGFKRKEIKAMTPKIIEFSELGEFIYQPVKKYSSGMRAKLGFSINITVNPDILVIDEALSVGDQTFAQKCLDKIYEFKEQNKTIFFVSHNLGQVRQFCTKIAWIEGGKLKDYGELDDVLPKYEAFLNDFKKKSKAEQKEFRNKLDEARFVIK</sequence>
<proteinExistence type="evidence at protein level"/>
<feature type="chain" id="PRO_0000092997" description="Teichoic acids export ATP-binding protein TagH">
    <location>
        <begin position="1"/>
        <end position="264"/>
    </location>
</feature>
<feature type="domain" description="ABC transporter" evidence="1">
    <location>
        <begin position="5"/>
        <end position="243"/>
    </location>
</feature>
<feature type="binding site" evidence="1">
    <location>
        <begin position="57"/>
        <end position="64"/>
    </location>
    <ligand>
        <name>ATP</name>
        <dbReference type="ChEBI" id="CHEBI:30616"/>
    </ligand>
</feature>
<comment type="function">
    <text evidence="1">Part of the ABC transporter complex TagGH involved in teichoic acids export. Responsible for energy coupling to the transport system.</text>
</comment>
<comment type="catalytic activity">
    <reaction evidence="1">
        <text>ATP + H2O + teichoic acidSide 1 = ADP + phosphate + teichoic acidSide 2.</text>
        <dbReference type="EC" id="7.5.2.4"/>
    </reaction>
</comment>
<comment type="subunit">
    <text evidence="1">The complex is composed of two ATP-binding proteins (TagH) and two transmembrane proteins (TagG).</text>
</comment>
<comment type="subcellular location">
    <subcellularLocation>
        <location evidence="1">Cell membrane</location>
        <topology evidence="1">Peripheral membrane protein</topology>
    </subcellularLocation>
</comment>
<comment type="similarity">
    <text evidence="1">Belongs to the ABC transporter superfamily. Teichoic acids exporter (TC 3.A.1.104.1) family.</text>
</comment>
<protein>
    <recommendedName>
        <fullName evidence="1">Teichoic acids export ATP-binding protein TagH</fullName>
        <ecNumber evidence="1">7.5.2.4</ecNumber>
    </recommendedName>
</protein>
<dbReference type="EC" id="7.5.2.4" evidence="1"/>
<dbReference type="EMBL" id="BA000018">
    <property type="protein sequence ID" value="BAB41825.1"/>
    <property type="molecule type" value="Genomic_DNA"/>
</dbReference>
<dbReference type="PIR" id="F89833">
    <property type="entry name" value="F89833"/>
</dbReference>
<dbReference type="RefSeq" id="WP_001103231.1">
    <property type="nucleotide sequence ID" value="NC_002745.2"/>
</dbReference>
<dbReference type="SMR" id="Q7A713"/>
<dbReference type="EnsemblBacteria" id="BAB41825">
    <property type="protein sequence ID" value="BAB41825"/>
    <property type="gene ID" value="BAB41825"/>
</dbReference>
<dbReference type="KEGG" id="sau:SA0593"/>
<dbReference type="HOGENOM" id="CLU_000604_1_2_9"/>
<dbReference type="GO" id="GO:0005886">
    <property type="term" value="C:plasma membrane"/>
    <property type="evidence" value="ECO:0007669"/>
    <property type="project" value="UniProtKB-SubCell"/>
</dbReference>
<dbReference type="GO" id="GO:0015438">
    <property type="term" value="F:ABC-type teichoic acid transporter activity"/>
    <property type="evidence" value="ECO:0007669"/>
    <property type="project" value="UniProtKB-EC"/>
</dbReference>
<dbReference type="GO" id="GO:0005524">
    <property type="term" value="F:ATP binding"/>
    <property type="evidence" value="ECO:0007669"/>
    <property type="project" value="UniProtKB-KW"/>
</dbReference>
<dbReference type="GO" id="GO:0016887">
    <property type="term" value="F:ATP hydrolysis activity"/>
    <property type="evidence" value="ECO:0007669"/>
    <property type="project" value="InterPro"/>
</dbReference>
<dbReference type="CDD" id="cd03220">
    <property type="entry name" value="ABC_KpsT_Wzt"/>
    <property type="match status" value="1"/>
</dbReference>
<dbReference type="FunFam" id="3.40.50.300:FF:003010">
    <property type="entry name" value="Teichoic acids export ATP-binding protein TagH"/>
    <property type="match status" value="1"/>
</dbReference>
<dbReference type="Gene3D" id="3.40.50.300">
    <property type="entry name" value="P-loop containing nucleotide triphosphate hydrolases"/>
    <property type="match status" value="1"/>
</dbReference>
<dbReference type="InterPro" id="IPR003593">
    <property type="entry name" value="AAA+_ATPase"/>
</dbReference>
<dbReference type="InterPro" id="IPR003439">
    <property type="entry name" value="ABC_transporter-like_ATP-bd"/>
</dbReference>
<dbReference type="InterPro" id="IPR017871">
    <property type="entry name" value="ABC_transporter-like_CS"/>
</dbReference>
<dbReference type="InterPro" id="IPR015860">
    <property type="entry name" value="ABC_transpr_TagH-like"/>
</dbReference>
<dbReference type="InterPro" id="IPR050683">
    <property type="entry name" value="Bact_Polysacc_Export_ATP-bd"/>
</dbReference>
<dbReference type="InterPro" id="IPR027417">
    <property type="entry name" value="P-loop_NTPase"/>
</dbReference>
<dbReference type="NCBIfam" id="NF010066">
    <property type="entry name" value="PRK13546.1"/>
    <property type="match status" value="1"/>
</dbReference>
<dbReference type="PANTHER" id="PTHR46743">
    <property type="entry name" value="TEICHOIC ACIDS EXPORT ATP-BINDING PROTEIN TAGH"/>
    <property type="match status" value="1"/>
</dbReference>
<dbReference type="PANTHER" id="PTHR46743:SF2">
    <property type="entry name" value="TEICHOIC ACIDS EXPORT ATP-BINDING PROTEIN TAGH"/>
    <property type="match status" value="1"/>
</dbReference>
<dbReference type="Pfam" id="PF00005">
    <property type="entry name" value="ABC_tran"/>
    <property type="match status" value="1"/>
</dbReference>
<dbReference type="SMART" id="SM00382">
    <property type="entry name" value="AAA"/>
    <property type="match status" value="1"/>
</dbReference>
<dbReference type="SUPFAM" id="SSF52540">
    <property type="entry name" value="P-loop containing nucleoside triphosphate hydrolases"/>
    <property type="match status" value="1"/>
</dbReference>
<dbReference type="PROSITE" id="PS00211">
    <property type="entry name" value="ABC_TRANSPORTER_1"/>
    <property type="match status" value="1"/>
</dbReference>
<dbReference type="PROSITE" id="PS50893">
    <property type="entry name" value="ABC_TRANSPORTER_2"/>
    <property type="match status" value="1"/>
</dbReference>
<dbReference type="PROSITE" id="PS51251">
    <property type="entry name" value="TAGH"/>
    <property type="match status" value="1"/>
</dbReference>
<name>TAGH_STAAN</name>
<evidence type="ECO:0000255" key="1">
    <source>
        <dbReference type="HAMAP-Rule" id="MF_01715"/>
    </source>
</evidence>
<accession>Q7A713</accession>
<organism>
    <name type="scientific">Staphylococcus aureus (strain N315)</name>
    <dbReference type="NCBI Taxonomy" id="158879"/>
    <lineage>
        <taxon>Bacteria</taxon>
        <taxon>Bacillati</taxon>
        <taxon>Bacillota</taxon>
        <taxon>Bacilli</taxon>
        <taxon>Bacillales</taxon>
        <taxon>Staphylococcaceae</taxon>
        <taxon>Staphylococcus</taxon>
    </lineage>
</organism>